<gene>
    <name type="primary">OPG024</name>
    <name type="ordered locus">VACWR018</name>
</gene>
<reference key="1">
    <citation type="journal article" date="1988" name="Virology">
        <title>Analysis of a large cluster of nonessential genes deleted from a vaccinia virus terminal transposition mutant.</title>
        <authorList>
            <person name="Kotwal G.J."/>
            <person name="Moss B."/>
        </authorList>
    </citation>
    <scope>NUCLEOTIDE SEQUENCE [GENOMIC DNA]</scope>
</reference>
<reference key="2">
    <citation type="submission" date="2003-02" db="EMBL/GenBank/DDBJ databases">
        <title>Sequencing of the coding region of Vaccinia-WR to an average 9-fold redundancy and an error rate of 0.16/10kb.</title>
        <authorList>
            <person name="Esposito J.J."/>
            <person name="Frace A.M."/>
            <person name="Sammons S.A."/>
            <person name="Olsen-Rasmussen M."/>
            <person name="Osborne J."/>
            <person name="Wohlhueter R."/>
        </authorList>
    </citation>
    <scope>NUCLEOTIDE SEQUENCE [GENOMIC DNA]</scope>
</reference>
<protein>
    <recommendedName>
        <fullName>OPG024 protein</fullName>
    </recommendedName>
</protein>
<evidence type="ECO:0000256" key="1">
    <source>
        <dbReference type="SAM" id="MobiDB-lite"/>
    </source>
</evidence>
<evidence type="ECO:0000305" key="2"/>
<evidence type="ECO:0007829" key="3">
    <source>
        <dbReference type="PDB" id="7NUF"/>
    </source>
</evidence>
<feature type="chain" id="PRO_0000099739" description="OPG024 protein">
    <location>
        <begin position="1"/>
        <end position="60"/>
    </location>
</feature>
<feature type="region of interest" description="Disordered" evidence="1">
    <location>
        <begin position="1"/>
        <end position="60"/>
    </location>
</feature>
<feature type="compositionally biased region" description="Gly residues" evidence="1">
    <location>
        <begin position="31"/>
        <end position="42"/>
    </location>
</feature>
<feature type="compositionally biased region" description="Gly residues" evidence="1">
    <location>
        <begin position="49"/>
        <end position="60"/>
    </location>
</feature>
<feature type="strand" evidence="3">
    <location>
        <begin position="12"/>
        <end position="17"/>
    </location>
</feature>
<feature type="strand" evidence="3">
    <location>
        <begin position="23"/>
        <end position="29"/>
    </location>
</feature>
<organism>
    <name type="scientific">Vaccinia virus (strain Western Reserve)</name>
    <name type="common">VACV</name>
    <name type="synonym">Vaccinia virus (strain WR)</name>
    <dbReference type="NCBI Taxonomy" id="10254"/>
    <lineage>
        <taxon>Viruses</taxon>
        <taxon>Varidnaviria</taxon>
        <taxon>Bamfordvirae</taxon>
        <taxon>Nucleocytoviricota</taxon>
        <taxon>Pokkesviricetes</taxon>
        <taxon>Chitovirales</taxon>
        <taxon>Poxviridae</taxon>
        <taxon>Chordopoxvirinae</taxon>
        <taxon>Orthopoxvirus</taxon>
        <taxon>Vaccinia virus</taxon>
    </lineage>
</organism>
<name>PG024_VACCW</name>
<accession>P17356</accession>
<accession>Q76ZY9</accession>
<dbReference type="EMBL" id="M22812">
    <property type="protein sequence ID" value="AAA69598.1"/>
    <property type="molecule type" value="Genomic_DNA"/>
</dbReference>
<dbReference type="EMBL" id="AY243312">
    <property type="protein sequence ID" value="AAO89297.1"/>
    <property type="molecule type" value="Genomic_DNA"/>
</dbReference>
<dbReference type="PIR" id="G31829">
    <property type="entry name" value="WZVZA7"/>
</dbReference>
<dbReference type="RefSeq" id="YP_232900.1">
    <property type="nucleotide sequence ID" value="NC_006998.1"/>
</dbReference>
<dbReference type="PDB" id="7NUF">
    <property type="method" value="X-ray"/>
    <property type="resolution" value="2.00 A"/>
    <property type="chains" value="C=11-30"/>
</dbReference>
<dbReference type="PDBsum" id="7NUF"/>
<dbReference type="SMR" id="P17356"/>
<dbReference type="GeneID" id="3707633"/>
<dbReference type="KEGG" id="vg:3707633"/>
<dbReference type="Proteomes" id="UP000000344">
    <property type="component" value="Genome"/>
</dbReference>
<dbReference type="InterPro" id="IPR009748">
    <property type="entry name" value="Orthopox_C10L"/>
</dbReference>
<dbReference type="Pfam" id="PF07020">
    <property type="entry name" value="Orthopox_C10L"/>
    <property type="match status" value="1"/>
</dbReference>
<organismHost>
    <name type="scientific">Bos taurus</name>
    <name type="common">Bovine</name>
    <dbReference type="NCBI Taxonomy" id="9913"/>
</organismHost>
<comment type="similarity">
    <text evidence="2">Belongs to the orthopoxvirus OPG024 family.</text>
</comment>
<keyword id="KW-0002">3D-structure</keyword>
<keyword id="KW-0244">Early protein</keyword>
<keyword id="KW-1185">Reference proteome</keyword>
<proteinExistence type="evidence at protein level"/>
<sequence>MSSKGGSSGGMWSVFIHGHDGSNKGSKTYTSGGGGMWGGGSSSGVKSGVNGGVKSGTGKI</sequence>